<accession>B8E1A7</accession>
<sequence length="299" mass="34410">MEYFELMFKTAKELEESIVAILEDVDSIGIAIEDNFFDESILWDYIDKSFSERNYILIKAYFDRNVDIDRIIDKIRTKIKEIFGEAKVEIEYRIIREEDWTNKWKKYAKPIYLDRIVVLPSWEEIGNVEDRILIRIDPGMAFGTGNHPTTIMCIEMLQKYLKEGMDVLDVGTGSGILSIVAKKLGGDKVKGVDIDEKAIEVAKKNAEGNHVEVEFQKNDLIDGINEKYDIVVANLIAEIILKLNANVKRVLKTDGIYIVSGIVQEKLDMILNSLRESGFKLLEVKEKEDWYTVVAQNED</sequence>
<evidence type="ECO:0000255" key="1">
    <source>
        <dbReference type="HAMAP-Rule" id="MF_00735"/>
    </source>
</evidence>
<feature type="chain" id="PRO_1000192619" description="Ribosomal protein L11 methyltransferase">
    <location>
        <begin position="1"/>
        <end position="299"/>
    </location>
</feature>
<feature type="binding site" evidence="1">
    <location>
        <position position="150"/>
    </location>
    <ligand>
        <name>S-adenosyl-L-methionine</name>
        <dbReference type="ChEBI" id="CHEBI:59789"/>
    </ligand>
</feature>
<feature type="binding site" evidence="1">
    <location>
        <position position="171"/>
    </location>
    <ligand>
        <name>S-adenosyl-L-methionine</name>
        <dbReference type="ChEBI" id="CHEBI:59789"/>
    </ligand>
</feature>
<feature type="binding site" evidence="1">
    <location>
        <position position="193"/>
    </location>
    <ligand>
        <name>S-adenosyl-L-methionine</name>
        <dbReference type="ChEBI" id="CHEBI:59789"/>
    </ligand>
</feature>
<feature type="binding site" evidence="1">
    <location>
        <position position="234"/>
    </location>
    <ligand>
        <name>S-adenosyl-L-methionine</name>
        <dbReference type="ChEBI" id="CHEBI:59789"/>
    </ligand>
</feature>
<protein>
    <recommendedName>
        <fullName evidence="1">Ribosomal protein L11 methyltransferase</fullName>
        <shortName evidence="1">L11 Mtase</shortName>
        <ecNumber evidence="1">2.1.1.-</ecNumber>
    </recommendedName>
</protein>
<name>PRMA_DICTD</name>
<reference key="1">
    <citation type="journal article" date="2016" name="Front. Microbiol.">
        <title>The complete genome sequence of hyperthermophile Dictyoglomus turgidum DSM 6724 reveals a specialized carbohydrate fermentor.</title>
        <authorList>
            <person name="Brumm P.J."/>
            <person name="Gowda K."/>
            <person name="Robb F.T."/>
            <person name="Mead D.A."/>
        </authorList>
    </citation>
    <scope>NUCLEOTIDE SEQUENCE [LARGE SCALE GENOMIC DNA]</scope>
    <source>
        <strain>DSM 6724 / Z-1310</strain>
    </source>
</reference>
<gene>
    <name evidence="1" type="primary">prmA</name>
    <name type="ordered locus">Dtur_0954</name>
</gene>
<keyword id="KW-0963">Cytoplasm</keyword>
<keyword id="KW-0489">Methyltransferase</keyword>
<keyword id="KW-1185">Reference proteome</keyword>
<keyword id="KW-0949">S-adenosyl-L-methionine</keyword>
<keyword id="KW-0808">Transferase</keyword>
<proteinExistence type="inferred from homology"/>
<dbReference type="EC" id="2.1.1.-" evidence="1"/>
<dbReference type="EMBL" id="CP001251">
    <property type="protein sequence ID" value="ACK42235.1"/>
    <property type="molecule type" value="Genomic_DNA"/>
</dbReference>
<dbReference type="RefSeq" id="WP_012583319.1">
    <property type="nucleotide sequence ID" value="NC_011661.1"/>
</dbReference>
<dbReference type="RefSeq" id="YP_002352849.1">
    <property type="nucleotide sequence ID" value="NC_011661.1"/>
</dbReference>
<dbReference type="SMR" id="B8E1A7"/>
<dbReference type="FunCoup" id="B8E1A7">
    <property type="interactions" value="280"/>
</dbReference>
<dbReference type="STRING" id="515635.Dtur_0954"/>
<dbReference type="EnsemblBacteria" id="ACK42235">
    <property type="protein sequence ID" value="ACK42235"/>
    <property type="gene ID" value="Dtur_0954"/>
</dbReference>
<dbReference type="KEGG" id="dtu:Dtur_0954"/>
<dbReference type="PATRIC" id="fig|515635.4.peg.991"/>
<dbReference type="eggNOG" id="COG2264">
    <property type="taxonomic scope" value="Bacteria"/>
</dbReference>
<dbReference type="HOGENOM" id="CLU_049382_0_1_0"/>
<dbReference type="InParanoid" id="B8E1A7"/>
<dbReference type="OrthoDB" id="9785995at2"/>
<dbReference type="Proteomes" id="UP000007719">
    <property type="component" value="Chromosome"/>
</dbReference>
<dbReference type="GO" id="GO:0005737">
    <property type="term" value="C:cytoplasm"/>
    <property type="evidence" value="ECO:0007669"/>
    <property type="project" value="UniProtKB-SubCell"/>
</dbReference>
<dbReference type="GO" id="GO:0008276">
    <property type="term" value="F:protein methyltransferase activity"/>
    <property type="evidence" value="ECO:0000318"/>
    <property type="project" value="GO_Central"/>
</dbReference>
<dbReference type="GO" id="GO:0016279">
    <property type="term" value="F:protein-lysine N-methyltransferase activity"/>
    <property type="evidence" value="ECO:0007669"/>
    <property type="project" value="RHEA"/>
</dbReference>
<dbReference type="GO" id="GO:0032259">
    <property type="term" value="P:methylation"/>
    <property type="evidence" value="ECO:0007669"/>
    <property type="project" value="UniProtKB-KW"/>
</dbReference>
<dbReference type="CDD" id="cd02440">
    <property type="entry name" value="AdoMet_MTases"/>
    <property type="match status" value="1"/>
</dbReference>
<dbReference type="Gene3D" id="3.40.50.150">
    <property type="entry name" value="Vaccinia Virus protein VP39"/>
    <property type="match status" value="1"/>
</dbReference>
<dbReference type="HAMAP" id="MF_00735">
    <property type="entry name" value="Methyltr_PrmA"/>
    <property type="match status" value="1"/>
</dbReference>
<dbReference type="InterPro" id="IPR050078">
    <property type="entry name" value="Ribosomal_L11_MeTrfase_PrmA"/>
</dbReference>
<dbReference type="InterPro" id="IPR004498">
    <property type="entry name" value="Ribosomal_PrmA_MeTrfase"/>
</dbReference>
<dbReference type="InterPro" id="IPR029063">
    <property type="entry name" value="SAM-dependent_MTases_sf"/>
</dbReference>
<dbReference type="NCBIfam" id="TIGR00406">
    <property type="entry name" value="prmA"/>
    <property type="match status" value="1"/>
</dbReference>
<dbReference type="PANTHER" id="PTHR43648">
    <property type="entry name" value="ELECTRON TRANSFER FLAVOPROTEIN BETA SUBUNIT LYSINE METHYLTRANSFERASE"/>
    <property type="match status" value="1"/>
</dbReference>
<dbReference type="PANTHER" id="PTHR43648:SF1">
    <property type="entry name" value="ELECTRON TRANSFER FLAVOPROTEIN BETA SUBUNIT LYSINE METHYLTRANSFERASE"/>
    <property type="match status" value="1"/>
</dbReference>
<dbReference type="Pfam" id="PF06325">
    <property type="entry name" value="PrmA"/>
    <property type="match status" value="1"/>
</dbReference>
<dbReference type="PIRSF" id="PIRSF000401">
    <property type="entry name" value="RPL11_MTase"/>
    <property type="match status" value="1"/>
</dbReference>
<dbReference type="SUPFAM" id="SSF53335">
    <property type="entry name" value="S-adenosyl-L-methionine-dependent methyltransferases"/>
    <property type="match status" value="1"/>
</dbReference>
<organism>
    <name type="scientific">Dictyoglomus turgidum (strain DSM 6724 / Z-1310)</name>
    <dbReference type="NCBI Taxonomy" id="515635"/>
    <lineage>
        <taxon>Bacteria</taxon>
        <taxon>Pseudomonadati</taxon>
        <taxon>Dictyoglomota</taxon>
        <taxon>Dictyoglomia</taxon>
        <taxon>Dictyoglomales</taxon>
        <taxon>Dictyoglomaceae</taxon>
        <taxon>Dictyoglomus</taxon>
    </lineage>
</organism>
<comment type="function">
    <text evidence="1">Methylates ribosomal protein L11.</text>
</comment>
<comment type="catalytic activity">
    <reaction evidence="1">
        <text>L-lysyl-[protein] + 3 S-adenosyl-L-methionine = N(6),N(6),N(6)-trimethyl-L-lysyl-[protein] + 3 S-adenosyl-L-homocysteine + 3 H(+)</text>
        <dbReference type="Rhea" id="RHEA:54192"/>
        <dbReference type="Rhea" id="RHEA-COMP:9752"/>
        <dbReference type="Rhea" id="RHEA-COMP:13826"/>
        <dbReference type="ChEBI" id="CHEBI:15378"/>
        <dbReference type="ChEBI" id="CHEBI:29969"/>
        <dbReference type="ChEBI" id="CHEBI:57856"/>
        <dbReference type="ChEBI" id="CHEBI:59789"/>
        <dbReference type="ChEBI" id="CHEBI:61961"/>
    </reaction>
</comment>
<comment type="subcellular location">
    <subcellularLocation>
        <location evidence="1">Cytoplasm</location>
    </subcellularLocation>
</comment>
<comment type="similarity">
    <text evidence="1">Belongs to the methyltransferase superfamily. PrmA family.</text>
</comment>